<proteinExistence type="inferred from homology"/>
<gene>
    <name evidence="1" type="primary">nuoK</name>
    <name type="ordered locus">BMASAVP1_A1140</name>
</gene>
<evidence type="ECO:0000255" key="1">
    <source>
        <dbReference type="HAMAP-Rule" id="MF_01456"/>
    </source>
</evidence>
<organism>
    <name type="scientific">Burkholderia mallei (strain SAVP1)</name>
    <dbReference type="NCBI Taxonomy" id="320388"/>
    <lineage>
        <taxon>Bacteria</taxon>
        <taxon>Pseudomonadati</taxon>
        <taxon>Pseudomonadota</taxon>
        <taxon>Betaproteobacteria</taxon>
        <taxon>Burkholderiales</taxon>
        <taxon>Burkholderiaceae</taxon>
        <taxon>Burkholderia</taxon>
        <taxon>pseudomallei group</taxon>
    </lineage>
</organism>
<protein>
    <recommendedName>
        <fullName evidence="1">NADH-quinone oxidoreductase subunit K</fullName>
        <ecNumber evidence="1">7.1.1.-</ecNumber>
    </recommendedName>
    <alternativeName>
        <fullName evidence="1">NADH dehydrogenase I subunit K</fullName>
    </alternativeName>
    <alternativeName>
        <fullName evidence="1">NDH-1 subunit K</fullName>
    </alternativeName>
</protein>
<comment type="function">
    <text evidence="1">NDH-1 shuttles electrons from NADH, via FMN and iron-sulfur (Fe-S) centers, to quinones in the respiratory chain. The immediate electron acceptor for the enzyme in this species is believed to be ubiquinone. Couples the redox reaction to proton translocation (for every two electrons transferred, four hydrogen ions are translocated across the cytoplasmic membrane), and thus conserves the redox energy in a proton gradient.</text>
</comment>
<comment type="catalytic activity">
    <reaction evidence="1">
        <text>a quinone + NADH + 5 H(+)(in) = a quinol + NAD(+) + 4 H(+)(out)</text>
        <dbReference type="Rhea" id="RHEA:57888"/>
        <dbReference type="ChEBI" id="CHEBI:15378"/>
        <dbReference type="ChEBI" id="CHEBI:24646"/>
        <dbReference type="ChEBI" id="CHEBI:57540"/>
        <dbReference type="ChEBI" id="CHEBI:57945"/>
        <dbReference type="ChEBI" id="CHEBI:132124"/>
    </reaction>
</comment>
<comment type="subunit">
    <text evidence="1">NDH-1 is composed of 14 different subunits. Subunits NuoA, H, J, K, L, M, N constitute the membrane sector of the complex.</text>
</comment>
<comment type="subcellular location">
    <subcellularLocation>
        <location evidence="1">Cell inner membrane</location>
        <topology evidence="1">Multi-pass membrane protein</topology>
    </subcellularLocation>
</comment>
<comment type="similarity">
    <text evidence="1">Belongs to the complex I subunit 4L family.</text>
</comment>
<dbReference type="EC" id="7.1.1.-" evidence="1"/>
<dbReference type="EMBL" id="CP000526">
    <property type="protein sequence ID" value="ABM50145.1"/>
    <property type="molecule type" value="Genomic_DNA"/>
</dbReference>
<dbReference type="RefSeq" id="WP_004185739.1">
    <property type="nucleotide sequence ID" value="NC_008785.1"/>
</dbReference>
<dbReference type="SMR" id="A1V2M6"/>
<dbReference type="GeneID" id="98107315"/>
<dbReference type="KEGG" id="bmv:BMASAVP1_A1140"/>
<dbReference type="HOGENOM" id="CLU_144724_2_0_4"/>
<dbReference type="GO" id="GO:0030964">
    <property type="term" value="C:NADH dehydrogenase complex"/>
    <property type="evidence" value="ECO:0007669"/>
    <property type="project" value="TreeGrafter"/>
</dbReference>
<dbReference type="GO" id="GO:0005886">
    <property type="term" value="C:plasma membrane"/>
    <property type="evidence" value="ECO:0007669"/>
    <property type="project" value="UniProtKB-SubCell"/>
</dbReference>
<dbReference type="GO" id="GO:0050136">
    <property type="term" value="F:NADH:ubiquinone reductase (non-electrogenic) activity"/>
    <property type="evidence" value="ECO:0007669"/>
    <property type="project" value="UniProtKB-UniRule"/>
</dbReference>
<dbReference type="GO" id="GO:0048038">
    <property type="term" value="F:quinone binding"/>
    <property type="evidence" value="ECO:0007669"/>
    <property type="project" value="UniProtKB-KW"/>
</dbReference>
<dbReference type="GO" id="GO:0042773">
    <property type="term" value="P:ATP synthesis coupled electron transport"/>
    <property type="evidence" value="ECO:0007669"/>
    <property type="project" value="InterPro"/>
</dbReference>
<dbReference type="FunFam" id="1.10.287.3510:FF:000001">
    <property type="entry name" value="NADH-quinone oxidoreductase subunit K"/>
    <property type="match status" value="1"/>
</dbReference>
<dbReference type="Gene3D" id="1.10.287.3510">
    <property type="match status" value="1"/>
</dbReference>
<dbReference type="HAMAP" id="MF_01456">
    <property type="entry name" value="NDH1_NuoK"/>
    <property type="match status" value="1"/>
</dbReference>
<dbReference type="InterPro" id="IPR001133">
    <property type="entry name" value="NADH_UbQ_OxRdtase_chain4L/K"/>
</dbReference>
<dbReference type="InterPro" id="IPR039428">
    <property type="entry name" value="NUOK/Mnh_C1-like"/>
</dbReference>
<dbReference type="NCBIfam" id="NF004320">
    <property type="entry name" value="PRK05715.1-2"/>
    <property type="match status" value="1"/>
</dbReference>
<dbReference type="NCBIfam" id="NF004321">
    <property type="entry name" value="PRK05715.1-3"/>
    <property type="match status" value="1"/>
</dbReference>
<dbReference type="NCBIfam" id="NF004323">
    <property type="entry name" value="PRK05715.1-5"/>
    <property type="match status" value="1"/>
</dbReference>
<dbReference type="PANTHER" id="PTHR11434:SF21">
    <property type="entry name" value="NADH DEHYDROGENASE SUBUNIT 4L-RELATED"/>
    <property type="match status" value="1"/>
</dbReference>
<dbReference type="PANTHER" id="PTHR11434">
    <property type="entry name" value="NADH-UBIQUINONE OXIDOREDUCTASE SUBUNIT ND4L"/>
    <property type="match status" value="1"/>
</dbReference>
<dbReference type="Pfam" id="PF00420">
    <property type="entry name" value="Oxidored_q2"/>
    <property type="match status" value="1"/>
</dbReference>
<sequence length="101" mass="11084">MLTLAHYLVLGAILFAIAIVGIFLNRRNIIIILMAIELMLLAVNTNFVAFSHYLGDVHGQIFVFFVLTVAAAEAAIGLAILVTLFRKLDTINVEDLDQLKG</sequence>
<name>NUOK_BURMS</name>
<reference key="1">
    <citation type="journal article" date="2010" name="Genome Biol. Evol.">
        <title>Continuing evolution of Burkholderia mallei through genome reduction and large-scale rearrangements.</title>
        <authorList>
            <person name="Losada L."/>
            <person name="Ronning C.M."/>
            <person name="DeShazer D."/>
            <person name="Woods D."/>
            <person name="Fedorova N."/>
            <person name="Kim H.S."/>
            <person name="Shabalina S.A."/>
            <person name="Pearson T.R."/>
            <person name="Brinkac L."/>
            <person name="Tan P."/>
            <person name="Nandi T."/>
            <person name="Crabtree J."/>
            <person name="Badger J."/>
            <person name="Beckstrom-Sternberg S."/>
            <person name="Saqib M."/>
            <person name="Schutzer S.E."/>
            <person name="Keim P."/>
            <person name="Nierman W.C."/>
        </authorList>
    </citation>
    <scope>NUCLEOTIDE SEQUENCE [LARGE SCALE GENOMIC DNA]</scope>
    <source>
        <strain>SAVP1</strain>
    </source>
</reference>
<feature type="chain" id="PRO_0000389991" description="NADH-quinone oxidoreductase subunit K">
    <location>
        <begin position="1"/>
        <end position="101"/>
    </location>
</feature>
<feature type="transmembrane region" description="Helical" evidence="1">
    <location>
        <begin position="4"/>
        <end position="24"/>
    </location>
</feature>
<feature type="transmembrane region" description="Helical" evidence="1">
    <location>
        <begin position="29"/>
        <end position="49"/>
    </location>
</feature>
<feature type="transmembrane region" description="Helical" evidence="1">
    <location>
        <begin position="61"/>
        <end position="81"/>
    </location>
</feature>
<accession>A1V2M6</accession>
<keyword id="KW-0997">Cell inner membrane</keyword>
<keyword id="KW-1003">Cell membrane</keyword>
<keyword id="KW-0472">Membrane</keyword>
<keyword id="KW-0520">NAD</keyword>
<keyword id="KW-0874">Quinone</keyword>
<keyword id="KW-1278">Translocase</keyword>
<keyword id="KW-0812">Transmembrane</keyword>
<keyword id="KW-1133">Transmembrane helix</keyword>
<keyword id="KW-0813">Transport</keyword>
<keyword id="KW-0830">Ubiquinone</keyword>